<protein>
    <recommendedName>
        <fullName evidence="1">Cell division topological specificity factor</fullName>
    </recommendedName>
</protein>
<proteinExistence type="inferred from homology"/>
<keyword id="KW-0131">Cell cycle</keyword>
<keyword id="KW-0132">Cell division</keyword>
<comment type="function">
    <text evidence="1">Prevents the cell division inhibition by proteins MinC and MinD at internal division sites while permitting inhibition at polar sites. This ensures cell division at the proper site by restricting the formation of a division septum at the midpoint of the long axis of the cell.</text>
</comment>
<comment type="similarity">
    <text evidence="1">Belongs to the MinE family.</text>
</comment>
<reference key="1">
    <citation type="journal article" date="2011" name="J. Bacteriol.">
        <title>Comparative genomics of 28 Salmonella enterica isolates: evidence for CRISPR-mediated adaptive sublineage evolution.</title>
        <authorList>
            <person name="Fricke W.F."/>
            <person name="Mammel M.K."/>
            <person name="McDermott P.F."/>
            <person name="Tartera C."/>
            <person name="White D.G."/>
            <person name="Leclerc J.E."/>
            <person name="Ravel J."/>
            <person name="Cebula T.A."/>
        </authorList>
    </citation>
    <scope>NUCLEOTIDE SEQUENCE [LARGE SCALE GENOMIC DNA]</scope>
    <source>
        <strain>CVM19633</strain>
    </source>
</reference>
<organism>
    <name type="scientific">Salmonella schwarzengrund (strain CVM19633)</name>
    <dbReference type="NCBI Taxonomy" id="439843"/>
    <lineage>
        <taxon>Bacteria</taxon>
        <taxon>Pseudomonadati</taxon>
        <taxon>Pseudomonadota</taxon>
        <taxon>Gammaproteobacteria</taxon>
        <taxon>Enterobacterales</taxon>
        <taxon>Enterobacteriaceae</taxon>
        <taxon>Salmonella</taxon>
    </lineage>
</organism>
<feature type="chain" id="PRO_1000114244" description="Cell division topological specificity factor">
    <location>
        <begin position="1"/>
        <end position="88"/>
    </location>
</feature>
<evidence type="ECO:0000255" key="1">
    <source>
        <dbReference type="HAMAP-Rule" id="MF_00262"/>
    </source>
</evidence>
<accession>B4TXY6</accession>
<name>MINE_SALSV</name>
<sequence>MALLDFFLSRKKSTANIAKERLQIIVAERRRSDAEPHYLPQLRKDILEVICKYVQIDPEMVTVQLEQKDGDISILELNVTLPEAEESK</sequence>
<dbReference type="EMBL" id="CP001127">
    <property type="protein sequence ID" value="ACF89166.1"/>
    <property type="molecule type" value="Genomic_DNA"/>
</dbReference>
<dbReference type="RefSeq" id="WP_001185666.1">
    <property type="nucleotide sequence ID" value="NC_011094.1"/>
</dbReference>
<dbReference type="SMR" id="B4TXY6"/>
<dbReference type="GeneID" id="92972923"/>
<dbReference type="KEGG" id="sew:SeSA_A1958"/>
<dbReference type="HOGENOM" id="CLU_137929_2_2_6"/>
<dbReference type="Proteomes" id="UP000001865">
    <property type="component" value="Chromosome"/>
</dbReference>
<dbReference type="GO" id="GO:0051301">
    <property type="term" value="P:cell division"/>
    <property type="evidence" value="ECO:0007669"/>
    <property type="project" value="UniProtKB-KW"/>
</dbReference>
<dbReference type="GO" id="GO:0032955">
    <property type="term" value="P:regulation of division septum assembly"/>
    <property type="evidence" value="ECO:0007669"/>
    <property type="project" value="InterPro"/>
</dbReference>
<dbReference type="FunFam" id="3.30.1070.10:FF:000001">
    <property type="entry name" value="Cell division topological specificity factor"/>
    <property type="match status" value="1"/>
</dbReference>
<dbReference type="Gene3D" id="3.30.1070.10">
    <property type="entry name" value="Cell division topological specificity factor MinE"/>
    <property type="match status" value="1"/>
</dbReference>
<dbReference type="HAMAP" id="MF_00262">
    <property type="entry name" value="MinE"/>
    <property type="match status" value="1"/>
</dbReference>
<dbReference type="InterPro" id="IPR005527">
    <property type="entry name" value="MinE"/>
</dbReference>
<dbReference type="InterPro" id="IPR036707">
    <property type="entry name" value="MinE_sf"/>
</dbReference>
<dbReference type="NCBIfam" id="TIGR01215">
    <property type="entry name" value="minE"/>
    <property type="match status" value="1"/>
</dbReference>
<dbReference type="NCBIfam" id="NF001422">
    <property type="entry name" value="PRK00296.1"/>
    <property type="match status" value="1"/>
</dbReference>
<dbReference type="Pfam" id="PF03776">
    <property type="entry name" value="MinE"/>
    <property type="match status" value="1"/>
</dbReference>
<dbReference type="SUPFAM" id="SSF55229">
    <property type="entry name" value="Cell division protein MinE topological specificity domain"/>
    <property type="match status" value="1"/>
</dbReference>
<gene>
    <name evidence="1" type="primary">minE</name>
    <name type="ordered locus">SeSA_A1958</name>
</gene>